<sequence>MLKLHPSIDNGFPPASPGFAGGTLKCKCASNPVTVRIGSQTAHNHACGCTKCWKPEGAIFAQIAVVGRDNVNVTSGAEKLQVVDPSATIQRYACRDCGTHMYGRIENTKHPFYGLDFVHTELSDETGWSPPEFAAFVSSIIESGVNPESMPEIRARLTELGLQPYDCLSPPLMDAIATHIAKQTGALPA</sequence>
<accession>Q92WX6</accession>
<proteinExistence type="inferred from homology"/>
<evidence type="ECO:0000250" key="1"/>
<evidence type="ECO:0000255" key="2">
    <source>
        <dbReference type="PROSITE-ProRule" id="PRU01239"/>
    </source>
</evidence>
<evidence type="ECO:0000305" key="3"/>
<organism>
    <name type="scientific">Rhizobium meliloti (strain 1021)</name>
    <name type="common">Ensifer meliloti</name>
    <name type="synonym">Sinorhizobium meliloti</name>
    <dbReference type="NCBI Taxonomy" id="266834"/>
    <lineage>
        <taxon>Bacteria</taxon>
        <taxon>Pseudomonadati</taxon>
        <taxon>Pseudomonadota</taxon>
        <taxon>Alphaproteobacteria</taxon>
        <taxon>Hyphomicrobiales</taxon>
        <taxon>Rhizobiaceae</taxon>
        <taxon>Sinorhizobium/Ensifer group</taxon>
        <taxon>Sinorhizobium</taxon>
    </lineage>
</organism>
<reference key="1">
    <citation type="journal article" date="2001" name="Proc. Natl. Acad. Sci. U.S.A.">
        <title>The complete sequence of the 1,683-kb pSymB megaplasmid from the N2-fixing endosymbiont Sinorhizobium meliloti.</title>
        <authorList>
            <person name="Finan T.M."/>
            <person name="Weidner S."/>
            <person name="Wong K."/>
            <person name="Buhrmester J."/>
            <person name="Chain P."/>
            <person name="Vorhoelter F.J."/>
            <person name="Hernandez-Lucas I."/>
            <person name="Becker A."/>
            <person name="Cowie A."/>
            <person name="Gouzy J."/>
            <person name="Golding B."/>
            <person name="Puehler A."/>
        </authorList>
    </citation>
    <scope>NUCLEOTIDE SEQUENCE [LARGE SCALE GENOMIC DNA]</scope>
    <source>
        <strain>1021</strain>
    </source>
</reference>
<reference key="2">
    <citation type="journal article" date="2001" name="Science">
        <title>The composite genome of the legume symbiont Sinorhizobium meliloti.</title>
        <authorList>
            <person name="Galibert F."/>
            <person name="Finan T.M."/>
            <person name="Long S.R."/>
            <person name="Puehler A."/>
            <person name="Abola P."/>
            <person name="Ampe F."/>
            <person name="Barloy-Hubler F."/>
            <person name="Barnett M.J."/>
            <person name="Becker A."/>
            <person name="Boistard P."/>
            <person name="Bothe G."/>
            <person name="Boutry M."/>
            <person name="Bowser L."/>
            <person name="Buhrmester J."/>
            <person name="Cadieu E."/>
            <person name="Capela D."/>
            <person name="Chain P."/>
            <person name="Cowie A."/>
            <person name="Davis R.W."/>
            <person name="Dreano S."/>
            <person name="Federspiel N.A."/>
            <person name="Fisher R.F."/>
            <person name="Gloux S."/>
            <person name="Godrie T."/>
            <person name="Goffeau A."/>
            <person name="Golding B."/>
            <person name="Gouzy J."/>
            <person name="Gurjal M."/>
            <person name="Hernandez-Lucas I."/>
            <person name="Hong A."/>
            <person name="Huizar L."/>
            <person name="Hyman R.W."/>
            <person name="Jones T."/>
            <person name="Kahn D."/>
            <person name="Kahn M.L."/>
            <person name="Kalman S."/>
            <person name="Keating D.H."/>
            <person name="Kiss E."/>
            <person name="Komp C."/>
            <person name="Lelaure V."/>
            <person name="Masuy D."/>
            <person name="Palm C."/>
            <person name="Peck M.C."/>
            <person name="Pohl T.M."/>
            <person name="Portetelle D."/>
            <person name="Purnelle B."/>
            <person name="Ramsperger U."/>
            <person name="Surzycki R."/>
            <person name="Thebault P."/>
            <person name="Vandenbol M."/>
            <person name="Vorhoelter F.J."/>
            <person name="Weidner S."/>
            <person name="Wells D.H."/>
            <person name="Wong K."/>
            <person name="Yeh K.-C."/>
            <person name="Batut J."/>
        </authorList>
    </citation>
    <scope>NUCLEOTIDE SEQUENCE [LARGE SCALE GENOMIC DNA]</scope>
    <source>
        <strain>1021</strain>
    </source>
</reference>
<feature type="chain" id="PRO_0000220323" description="Glutathione-dependent formaldehyde-activating enzyme">
    <location>
        <begin position="1"/>
        <end position="189"/>
    </location>
</feature>
<feature type="domain" description="CENP-V/GFA" evidence="2">
    <location>
        <begin position="19"/>
        <end position="166"/>
    </location>
</feature>
<feature type="binding site" evidence="2">
    <location>
        <position position="26"/>
    </location>
    <ligand>
        <name>Zn(2+)</name>
        <dbReference type="ChEBI" id="CHEBI:29105"/>
        <label>1</label>
        <note>structural</note>
    </ligand>
</feature>
<feature type="binding site" evidence="2">
    <location>
        <position position="28"/>
    </location>
    <ligand>
        <name>Zn(2+)</name>
        <dbReference type="ChEBI" id="CHEBI:29105"/>
        <label>1</label>
        <note>structural</note>
    </ligand>
</feature>
<feature type="binding site" evidence="2">
    <location>
        <position position="47"/>
    </location>
    <ligand>
        <name>Zn(2+)</name>
        <dbReference type="ChEBI" id="CHEBI:29105"/>
        <label>2</label>
        <note>catalytic</note>
    </ligand>
</feature>
<feature type="binding site" evidence="2">
    <location>
        <position position="49"/>
    </location>
    <ligand>
        <name>Zn(2+)</name>
        <dbReference type="ChEBI" id="CHEBI:29105"/>
        <label>2</label>
        <note>catalytic</note>
    </ligand>
</feature>
<feature type="binding site" evidence="2">
    <location>
        <position position="52"/>
    </location>
    <ligand>
        <name>Zn(2+)</name>
        <dbReference type="ChEBI" id="CHEBI:29105"/>
        <label>2</label>
        <note>catalytic</note>
    </ligand>
</feature>
<feature type="binding site" evidence="2">
    <location>
        <position position="94"/>
    </location>
    <ligand>
        <name>Zn(2+)</name>
        <dbReference type="ChEBI" id="CHEBI:29105"/>
        <label>1</label>
        <note>structural</note>
    </ligand>
</feature>
<feature type="binding site" evidence="2">
    <location>
        <position position="97"/>
    </location>
    <ligand>
        <name>Zn(2+)</name>
        <dbReference type="ChEBI" id="CHEBI:29105"/>
        <label>1</label>
        <note>structural</note>
    </ligand>
</feature>
<name>GFA_RHIME</name>
<keyword id="KW-0456">Lyase</keyword>
<keyword id="KW-0479">Metal-binding</keyword>
<keyword id="KW-0614">Plasmid</keyword>
<keyword id="KW-1185">Reference proteome</keyword>
<keyword id="KW-0862">Zinc</keyword>
<gene>
    <name type="primary">gfa</name>
    <name type="ordered locus">RB0186</name>
    <name type="ORF">SMb20186</name>
</gene>
<comment type="function">
    <text evidence="1">Catalyzes the condensation of formaldehyde and glutathione to S-hydroxymethylglutathione.</text>
</comment>
<comment type="catalytic activity">
    <reaction>
        <text>S-(hydroxymethyl)glutathione = glutathione + formaldehyde</text>
        <dbReference type="Rhea" id="RHEA:22488"/>
        <dbReference type="ChEBI" id="CHEBI:16842"/>
        <dbReference type="ChEBI" id="CHEBI:57925"/>
        <dbReference type="ChEBI" id="CHEBI:58758"/>
        <dbReference type="EC" id="4.4.1.22"/>
    </reaction>
</comment>
<comment type="cofactor">
    <cofactor evidence="2">
        <name>Zn(2+)</name>
        <dbReference type="ChEBI" id="CHEBI:29105"/>
    </cofactor>
    <text evidence="2">Binds 2 Zn(2+) ions per subunit.</text>
</comment>
<comment type="pathway">
    <text>One-carbon metabolism; formaldehyde degradation; formate from formaldehyde (glutathione route): step 1/3.</text>
</comment>
<comment type="similarity">
    <text evidence="3">Belongs to the Gfa family.</text>
</comment>
<protein>
    <recommendedName>
        <fullName>Glutathione-dependent formaldehyde-activating enzyme</fullName>
        <ecNumber>4.4.1.22</ecNumber>
    </recommendedName>
    <alternativeName>
        <fullName>S-(hydroxymethyl)glutathione synthase</fullName>
    </alternativeName>
</protein>
<dbReference type="EC" id="4.4.1.22"/>
<dbReference type="EMBL" id="AL591985">
    <property type="protein sequence ID" value="CAC48586.1"/>
    <property type="molecule type" value="Genomic_DNA"/>
</dbReference>
<dbReference type="PIR" id="B95865">
    <property type="entry name" value="B95865"/>
</dbReference>
<dbReference type="RefSeq" id="NP_436726.1">
    <property type="nucleotide sequence ID" value="NC_003078.1"/>
</dbReference>
<dbReference type="RefSeq" id="WP_010975095.1">
    <property type="nucleotide sequence ID" value="NC_003078.1"/>
</dbReference>
<dbReference type="SMR" id="Q92WX6"/>
<dbReference type="EnsemblBacteria" id="CAC48586">
    <property type="protein sequence ID" value="CAC48586"/>
    <property type="gene ID" value="SM_b20186"/>
</dbReference>
<dbReference type="GeneID" id="89578694"/>
<dbReference type="KEGG" id="sme:SM_b20186"/>
<dbReference type="PATRIC" id="fig|266834.11.peg.5102"/>
<dbReference type="eggNOG" id="COG3791">
    <property type="taxonomic scope" value="Bacteria"/>
</dbReference>
<dbReference type="HOGENOM" id="CLU_090716_0_0_5"/>
<dbReference type="OrthoDB" id="9011205at2"/>
<dbReference type="UniPathway" id="UPA00562">
    <property type="reaction ID" value="UER00621"/>
</dbReference>
<dbReference type="PRO" id="PR:Q92WX6"/>
<dbReference type="Proteomes" id="UP000001976">
    <property type="component" value="Plasmid pSymB"/>
</dbReference>
<dbReference type="GO" id="GO:0051907">
    <property type="term" value="F:S-(hydroxymethyl)glutathione synthase activity"/>
    <property type="evidence" value="ECO:0007669"/>
    <property type="project" value="UniProtKB-UniRule"/>
</dbReference>
<dbReference type="GO" id="GO:0008270">
    <property type="term" value="F:zinc ion binding"/>
    <property type="evidence" value="ECO:0007669"/>
    <property type="project" value="UniProtKB-UniRule"/>
</dbReference>
<dbReference type="GO" id="GO:0046294">
    <property type="term" value="P:formaldehyde catabolic process"/>
    <property type="evidence" value="ECO:0007669"/>
    <property type="project" value="UniProtKB-UniRule"/>
</dbReference>
<dbReference type="Gene3D" id="3.90.1590.10">
    <property type="entry name" value="glutathione-dependent formaldehyde- activating enzyme (gfa)"/>
    <property type="match status" value="1"/>
</dbReference>
<dbReference type="HAMAP" id="MF_00723">
    <property type="entry name" value="Formald_GSH"/>
    <property type="match status" value="1"/>
</dbReference>
<dbReference type="InterPro" id="IPR006913">
    <property type="entry name" value="CENP-V/GFA"/>
</dbReference>
<dbReference type="InterPro" id="IPR014185">
    <property type="entry name" value="Formald_GSH"/>
</dbReference>
<dbReference type="InterPro" id="IPR011057">
    <property type="entry name" value="Mss4-like_sf"/>
</dbReference>
<dbReference type="NCBIfam" id="TIGR02820">
    <property type="entry name" value="formald_GSH"/>
    <property type="match status" value="1"/>
</dbReference>
<dbReference type="NCBIfam" id="NF003829">
    <property type="entry name" value="PRK05417.1"/>
    <property type="match status" value="1"/>
</dbReference>
<dbReference type="PANTHER" id="PTHR33337:SF40">
    <property type="entry name" value="CENP-V_GFA DOMAIN-CONTAINING PROTEIN-RELATED"/>
    <property type="match status" value="1"/>
</dbReference>
<dbReference type="PANTHER" id="PTHR33337">
    <property type="entry name" value="GFA DOMAIN-CONTAINING PROTEIN"/>
    <property type="match status" value="1"/>
</dbReference>
<dbReference type="Pfam" id="PF04828">
    <property type="entry name" value="GFA"/>
    <property type="match status" value="1"/>
</dbReference>
<dbReference type="PIRSF" id="PIRSF033318">
    <property type="entry name" value="Formald_GSH"/>
    <property type="match status" value="1"/>
</dbReference>
<dbReference type="SUPFAM" id="SSF51316">
    <property type="entry name" value="Mss4-like"/>
    <property type="match status" value="1"/>
</dbReference>
<dbReference type="PROSITE" id="PS51891">
    <property type="entry name" value="CENP_V_GFA"/>
    <property type="match status" value="1"/>
</dbReference>
<geneLocation type="plasmid">
    <name>pSymB</name>
    <name>megaplasmid 2</name>
</geneLocation>